<organism>
    <name type="scientific">Mycobacterium tuberculosis (strain ATCC 25177 / H37Ra)</name>
    <dbReference type="NCBI Taxonomy" id="419947"/>
    <lineage>
        <taxon>Bacteria</taxon>
        <taxon>Bacillati</taxon>
        <taxon>Actinomycetota</taxon>
        <taxon>Actinomycetes</taxon>
        <taxon>Mycobacteriales</taxon>
        <taxon>Mycobacteriaceae</taxon>
        <taxon>Mycobacterium</taxon>
        <taxon>Mycobacterium tuberculosis complex</taxon>
    </lineage>
</organism>
<comment type="function">
    <text evidence="1">Involved in DNA repair and RecF pathway recombination.</text>
</comment>
<comment type="similarity">
    <text evidence="1">Belongs to the RecO family.</text>
</comment>
<keyword id="KW-0227">DNA damage</keyword>
<keyword id="KW-0233">DNA recombination</keyword>
<keyword id="KW-0234">DNA repair</keyword>
<keyword id="KW-1185">Reference proteome</keyword>
<evidence type="ECO:0000255" key="1">
    <source>
        <dbReference type="HAMAP-Rule" id="MF_00201"/>
    </source>
</evidence>
<proteinExistence type="inferred from homology"/>
<feature type="chain" id="PRO_1000012143" description="DNA repair protein RecO">
    <location>
        <begin position="1"/>
        <end position="265"/>
    </location>
</feature>
<name>RECO_MYCTA</name>
<protein>
    <recommendedName>
        <fullName evidence="1">DNA repair protein RecO</fullName>
    </recommendedName>
    <alternativeName>
        <fullName evidence="1">Recombination protein O</fullName>
    </alternativeName>
</protein>
<sequence>MRLYRDRAVVLRQHKLGEADRIVTLLTRDHGLVRAVAKGVRRTRSKFGARLEPFAHIEVQLHPGRNLDIVTQVVSVDAFATDIVADYGRYTCGCAILETAERLAGEERAPAPALHRLTVGALRAVADGQRPRDLLLDAYLLRAMGIAGWAPALTECARCATPGPHRAFHIATGGSVCAHCRPAGSTTPPLGVVDLMSALYDGDWEAAEAAPQSARSHVSGLVAAHLQWHLERQLKTLPLVERFYQADRSVAERRAALIGQDIAGG</sequence>
<dbReference type="EMBL" id="CP000611">
    <property type="protein sequence ID" value="ABQ74155.1"/>
    <property type="molecule type" value="Genomic_DNA"/>
</dbReference>
<dbReference type="RefSeq" id="WP_003412222.1">
    <property type="nucleotide sequence ID" value="NZ_CP016972.1"/>
</dbReference>
<dbReference type="SMR" id="A5U555"/>
<dbReference type="GeneID" id="45426349"/>
<dbReference type="KEGG" id="mra:MRA_2386"/>
<dbReference type="eggNOG" id="COG1381">
    <property type="taxonomic scope" value="Bacteria"/>
</dbReference>
<dbReference type="HOGENOM" id="CLU_066632_1_1_11"/>
<dbReference type="Proteomes" id="UP000001988">
    <property type="component" value="Chromosome"/>
</dbReference>
<dbReference type="GO" id="GO:0043590">
    <property type="term" value="C:bacterial nucleoid"/>
    <property type="evidence" value="ECO:0007669"/>
    <property type="project" value="TreeGrafter"/>
</dbReference>
<dbReference type="GO" id="GO:0006310">
    <property type="term" value="P:DNA recombination"/>
    <property type="evidence" value="ECO:0007669"/>
    <property type="project" value="UniProtKB-UniRule"/>
</dbReference>
<dbReference type="GO" id="GO:0006302">
    <property type="term" value="P:double-strand break repair"/>
    <property type="evidence" value="ECO:0007669"/>
    <property type="project" value="TreeGrafter"/>
</dbReference>
<dbReference type="FunFam" id="1.20.1440.120:FF:000002">
    <property type="entry name" value="DNA repair protein RecO"/>
    <property type="match status" value="1"/>
</dbReference>
<dbReference type="FunFam" id="2.40.50.140:FF:000176">
    <property type="entry name" value="DNA repair protein RecO"/>
    <property type="match status" value="1"/>
</dbReference>
<dbReference type="Gene3D" id="2.40.50.140">
    <property type="entry name" value="Nucleic acid-binding proteins"/>
    <property type="match status" value="1"/>
</dbReference>
<dbReference type="Gene3D" id="1.20.1440.120">
    <property type="entry name" value="Recombination protein O, C-terminal domain"/>
    <property type="match status" value="1"/>
</dbReference>
<dbReference type="HAMAP" id="MF_00201">
    <property type="entry name" value="RecO"/>
    <property type="match status" value="1"/>
</dbReference>
<dbReference type="InterPro" id="IPR037278">
    <property type="entry name" value="ARFGAP/RecO"/>
</dbReference>
<dbReference type="InterPro" id="IPR022572">
    <property type="entry name" value="DNA_rep/recomb_RecO_N"/>
</dbReference>
<dbReference type="InterPro" id="IPR012340">
    <property type="entry name" value="NA-bd_OB-fold"/>
</dbReference>
<dbReference type="InterPro" id="IPR003717">
    <property type="entry name" value="RecO"/>
</dbReference>
<dbReference type="InterPro" id="IPR042242">
    <property type="entry name" value="RecO_C"/>
</dbReference>
<dbReference type="NCBIfam" id="TIGR00613">
    <property type="entry name" value="reco"/>
    <property type="match status" value="1"/>
</dbReference>
<dbReference type="PANTHER" id="PTHR33991">
    <property type="entry name" value="DNA REPAIR PROTEIN RECO"/>
    <property type="match status" value="1"/>
</dbReference>
<dbReference type="PANTHER" id="PTHR33991:SF1">
    <property type="entry name" value="DNA REPAIR PROTEIN RECO"/>
    <property type="match status" value="1"/>
</dbReference>
<dbReference type="Pfam" id="PF02565">
    <property type="entry name" value="RecO_C"/>
    <property type="match status" value="1"/>
</dbReference>
<dbReference type="Pfam" id="PF11967">
    <property type="entry name" value="RecO_N"/>
    <property type="match status" value="1"/>
</dbReference>
<dbReference type="SUPFAM" id="SSF57863">
    <property type="entry name" value="ArfGap/RecO-like zinc finger"/>
    <property type="match status" value="1"/>
</dbReference>
<dbReference type="SUPFAM" id="SSF50249">
    <property type="entry name" value="Nucleic acid-binding proteins"/>
    <property type="match status" value="1"/>
</dbReference>
<reference key="1">
    <citation type="journal article" date="2008" name="PLoS ONE">
        <title>Genetic basis of virulence attenuation revealed by comparative genomic analysis of Mycobacterium tuberculosis strain H37Ra versus H37Rv.</title>
        <authorList>
            <person name="Zheng H."/>
            <person name="Lu L."/>
            <person name="Wang B."/>
            <person name="Pu S."/>
            <person name="Zhang X."/>
            <person name="Zhu G."/>
            <person name="Shi W."/>
            <person name="Zhang L."/>
            <person name="Wang H."/>
            <person name="Wang S."/>
            <person name="Zhao G."/>
            <person name="Zhang Y."/>
        </authorList>
    </citation>
    <scope>NUCLEOTIDE SEQUENCE [LARGE SCALE GENOMIC DNA]</scope>
    <source>
        <strain>ATCC 25177 / H37Ra</strain>
    </source>
</reference>
<accession>A5U555</accession>
<gene>
    <name evidence="1" type="primary">recO</name>
    <name type="ordered locus">MRA_2386</name>
</gene>